<comment type="function">
    <text evidence="1">Heme chaperone required for the biogenesis of c-type cytochromes. Transiently binds heme delivered by CcmC and transfers the heme to apo-cytochromes in a process facilitated by CcmF and CcmH.</text>
</comment>
<comment type="subcellular location">
    <subcellularLocation>
        <location evidence="1">Cell inner membrane</location>
        <topology evidence="1">Single-pass type II membrane protein</topology>
        <orientation evidence="1">Periplasmic side</orientation>
    </subcellularLocation>
</comment>
<comment type="similarity">
    <text evidence="1">Belongs to the CcmE/CycJ family.</text>
</comment>
<feature type="chain" id="PRO_1000070845" description="Cytochrome c-type biogenesis protein CcmE">
    <location>
        <begin position="1"/>
        <end position="128"/>
    </location>
</feature>
<feature type="topological domain" description="Cytoplasmic" evidence="1">
    <location>
        <begin position="1"/>
        <end position="8"/>
    </location>
</feature>
<feature type="transmembrane region" description="Helical; Signal-anchor for type II membrane protein" evidence="1">
    <location>
        <begin position="9"/>
        <end position="29"/>
    </location>
</feature>
<feature type="topological domain" description="Periplasmic" evidence="1">
    <location>
        <begin position="30"/>
        <end position="128"/>
    </location>
</feature>
<feature type="binding site" description="covalent" evidence="1">
    <location>
        <position position="120"/>
    </location>
    <ligand>
        <name>heme</name>
        <dbReference type="ChEBI" id="CHEBI:30413"/>
    </ligand>
</feature>
<feature type="binding site" description="axial binding residue" evidence="1">
    <location>
        <position position="124"/>
    </location>
    <ligand>
        <name>heme</name>
        <dbReference type="ChEBI" id="CHEBI:30413"/>
    </ligand>
    <ligandPart>
        <name>Fe</name>
        <dbReference type="ChEBI" id="CHEBI:18248"/>
    </ligandPart>
</feature>
<sequence>MQKRVRNRLITIIICFCSAFLGIGIILYNLENNIVFFLPPSKINAIEQDKELRVGGLVKTSSINKIAADKISFIITDNIKDLEILYQGILPALFREGQGIIAIGQLSDGKFMARQLLTKHDENYRPTR</sequence>
<gene>
    <name evidence="1" type="primary">ccmE</name>
    <name evidence="1" type="synonym">cycJ</name>
    <name type="ordered locus">A1E_01920</name>
</gene>
<keyword id="KW-0997">Cell inner membrane</keyword>
<keyword id="KW-1003">Cell membrane</keyword>
<keyword id="KW-0201">Cytochrome c-type biogenesis</keyword>
<keyword id="KW-0349">Heme</keyword>
<keyword id="KW-0408">Iron</keyword>
<keyword id="KW-0472">Membrane</keyword>
<keyword id="KW-0479">Metal-binding</keyword>
<keyword id="KW-0735">Signal-anchor</keyword>
<keyword id="KW-0812">Transmembrane</keyword>
<keyword id="KW-1133">Transmembrane helix</keyword>
<organism>
    <name type="scientific">Rickettsia canadensis (strain McKiel)</name>
    <dbReference type="NCBI Taxonomy" id="293613"/>
    <lineage>
        <taxon>Bacteria</taxon>
        <taxon>Pseudomonadati</taxon>
        <taxon>Pseudomonadota</taxon>
        <taxon>Alphaproteobacteria</taxon>
        <taxon>Rickettsiales</taxon>
        <taxon>Rickettsiaceae</taxon>
        <taxon>Rickettsieae</taxon>
        <taxon>Rickettsia</taxon>
        <taxon>belli group</taxon>
    </lineage>
</organism>
<protein>
    <recommendedName>
        <fullName evidence="1">Cytochrome c-type biogenesis protein CcmE</fullName>
    </recommendedName>
    <alternativeName>
        <fullName evidence="1">Cytochrome c maturation protein E</fullName>
    </alternativeName>
    <alternativeName>
        <fullName evidence="1">Heme chaperone CcmE</fullName>
    </alternativeName>
</protein>
<proteinExistence type="inferred from homology"/>
<accession>A8EY96</accession>
<name>CCME_RICCK</name>
<reference key="1">
    <citation type="submission" date="2007-09" db="EMBL/GenBank/DDBJ databases">
        <title>Complete genome sequence of Rickettsia canadensis.</title>
        <authorList>
            <person name="Madan A."/>
            <person name="Fahey J."/>
            <person name="Helton E."/>
            <person name="Ketteman M."/>
            <person name="Madan A."/>
            <person name="Rodrigues S."/>
            <person name="Sanchez A."/>
            <person name="Whiting M."/>
            <person name="Dasch G."/>
            <person name="Eremeeva M."/>
        </authorList>
    </citation>
    <scope>NUCLEOTIDE SEQUENCE [LARGE SCALE GENOMIC DNA]</scope>
    <source>
        <strain>McKiel</strain>
    </source>
</reference>
<dbReference type="EMBL" id="CP000409">
    <property type="protein sequence ID" value="ABV73329.1"/>
    <property type="molecule type" value="Genomic_DNA"/>
</dbReference>
<dbReference type="RefSeq" id="WP_012148528.1">
    <property type="nucleotide sequence ID" value="NC_009879.1"/>
</dbReference>
<dbReference type="SMR" id="A8EY96"/>
<dbReference type="STRING" id="293613.A1E_01920"/>
<dbReference type="KEGG" id="rcm:A1E_01920"/>
<dbReference type="eggNOG" id="COG2332">
    <property type="taxonomic scope" value="Bacteria"/>
</dbReference>
<dbReference type="HOGENOM" id="CLU_079503_1_1_5"/>
<dbReference type="Proteomes" id="UP000007056">
    <property type="component" value="Chromosome"/>
</dbReference>
<dbReference type="GO" id="GO:0005886">
    <property type="term" value="C:plasma membrane"/>
    <property type="evidence" value="ECO:0007669"/>
    <property type="project" value="UniProtKB-SubCell"/>
</dbReference>
<dbReference type="GO" id="GO:0020037">
    <property type="term" value="F:heme binding"/>
    <property type="evidence" value="ECO:0007669"/>
    <property type="project" value="InterPro"/>
</dbReference>
<dbReference type="GO" id="GO:0046872">
    <property type="term" value="F:metal ion binding"/>
    <property type="evidence" value="ECO:0007669"/>
    <property type="project" value="UniProtKB-KW"/>
</dbReference>
<dbReference type="GO" id="GO:0017004">
    <property type="term" value="P:cytochrome complex assembly"/>
    <property type="evidence" value="ECO:0007669"/>
    <property type="project" value="UniProtKB-KW"/>
</dbReference>
<dbReference type="Gene3D" id="2.40.50.140">
    <property type="entry name" value="Nucleic acid-binding proteins"/>
    <property type="match status" value="1"/>
</dbReference>
<dbReference type="HAMAP" id="MF_01959">
    <property type="entry name" value="CcmE"/>
    <property type="match status" value="1"/>
</dbReference>
<dbReference type="InterPro" id="IPR004329">
    <property type="entry name" value="CcmE"/>
</dbReference>
<dbReference type="InterPro" id="IPR036127">
    <property type="entry name" value="CcmE-like_sf"/>
</dbReference>
<dbReference type="InterPro" id="IPR012340">
    <property type="entry name" value="NA-bd_OB-fold"/>
</dbReference>
<dbReference type="NCBIfam" id="NF009727">
    <property type="entry name" value="PRK13254.1-1"/>
    <property type="match status" value="1"/>
</dbReference>
<dbReference type="PANTHER" id="PTHR34128">
    <property type="entry name" value="CYTOCHROME C-TYPE BIOGENESIS PROTEIN CCME HOMOLOG, MITOCHONDRIAL"/>
    <property type="match status" value="1"/>
</dbReference>
<dbReference type="PANTHER" id="PTHR34128:SF2">
    <property type="entry name" value="CYTOCHROME C-TYPE BIOGENESIS PROTEIN CCME HOMOLOG, MITOCHONDRIAL"/>
    <property type="match status" value="1"/>
</dbReference>
<dbReference type="Pfam" id="PF03100">
    <property type="entry name" value="CcmE"/>
    <property type="match status" value="1"/>
</dbReference>
<dbReference type="SUPFAM" id="SSF82093">
    <property type="entry name" value="Heme chaperone CcmE"/>
    <property type="match status" value="1"/>
</dbReference>
<evidence type="ECO:0000255" key="1">
    <source>
        <dbReference type="HAMAP-Rule" id="MF_01959"/>
    </source>
</evidence>